<keyword id="KW-0002">3D-structure</keyword>
<keyword id="KW-0020">Allergen</keyword>
<keyword id="KW-0903">Direct protein sequencing</keyword>
<keyword id="KW-0326">Glycosidase</keyword>
<keyword id="KW-0378">Hydrolase</keyword>
<keyword id="KW-0732">Signal</keyword>
<accession>O22317</accession>
<accession>A7U7Q7</accession>
<accession>D8UYM8</accession>
<comment type="function">
    <text evidence="1 2 9 11">Possesses beta-1,3-endoglucanase activity in vitro (PubMed:10672030). May play a role in fruit pulp softening process (Probable). Can cleave beta-1,6-branched glucans in vitro (PubMed:16421930).</text>
</comment>
<comment type="catalytic activity">
    <reaction evidence="1">
        <text>Hydrolysis of (1-&gt;3)-beta-D-glucosidic linkages in (1-&gt;3)-beta-D-glucans.</text>
        <dbReference type="EC" id="3.2.1.39"/>
    </reaction>
</comment>
<comment type="biophysicochemical properties">
    <phDependence>
        <text evidence="1">Optimum pH is 4.5.</text>
    </phDependence>
</comment>
<comment type="subunit">
    <text evidence="4">Monomer.</text>
</comment>
<comment type="tissue specificity">
    <text evidence="6">Expressed in fruit peel and pulp.</text>
</comment>
<comment type="developmental stage">
    <text evidence="3 6">Expression increases in fruit pulp at early stages of fruit ripening and then decreases in late stages (PubMed:9342866). Expression increases in fruit peel and pulp during ripening (at protein level) (PubMed:20467747).</text>
</comment>
<comment type="induction">
    <text evidence="3">Induced by ethylene (PubMed:20467747). Down-regulated by exposure to constant white light (PubMed:20467747).</text>
</comment>
<comment type="allergen">
    <text evidence="4 5 12">Causes an allergic reaction in human (PubMed:22162266, PubMed:24198217). Binds to IgE of patients allergic to banana fruit (PubMed:22162266, PubMed:24198217). Induces basophil activation in blood sample of patient allergic to banana fruit (PubMed:22162266). Binds to IgE of patients allergic to rubber latex (PubMed:22162266). Associated to the latex-fruit syndrome, a hypersensitivity to some freshly consumed fruits developed by individuals who are allergic to natural rubber latex (Probable).</text>
</comment>
<comment type="similarity">
    <text evidence="8">Belongs to the glycosyl hydrolase 17 family.</text>
</comment>
<organism>
    <name type="scientific">Musa acuminata</name>
    <name type="common">Banana</name>
    <name type="synonym">Musa cavendishii</name>
    <dbReference type="NCBI Taxonomy" id="4641"/>
    <lineage>
        <taxon>Eukaryota</taxon>
        <taxon>Viridiplantae</taxon>
        <taxon>Streptophyta</taxon>
        <taxon>Embryophyta</taxon>
        <taxon>Tracheophyta</taxon>
        <taxon>Spermatophyta</taxon>
        <taxon>Magnoliopsida</taxon>
        <taxon>Liliopsida</taxon>
        <taxon>Zingiberales</taxon>
        <taxon>Musaceae</taxon>
        <taxon>Musa</taxon>
    </lineage>
</organism>
<dbReference type="EC" id="3.2.1.39" evidence="1"/>
<dbReference type="EMBL" id="AF001523">
    <property type="protein sequence ID" value="AAB82772.2"/>
    <property type="molecule type" value="mRNA"/>
</dbReference>
<dbReference type="EMBL" id="EU014210">
    <property type="protein sequence ID" value="ABU40624.1"/>
    <property type="molecule type" value="mRNA"/>
</dbReference>
<dbReference type="EMBL" id="GQ268963">
    <property type="protein sequence ID" value="ADG36438.1"/>
    <property type="molecule type" value="mRNA"/>
</dbReference>
<dbReference type="PDB" id="2CYG">
    <property type="method" value="X-ray"/>
    <property type="resolution" value="1.45 A"/>
    <property type="chains" value="A=29-340"/>
</dbReference>
<dbReference type="PDBsum" id="2CYG"/>
<dbReference type="SMR" id="O22317"/>
<dbReference type="Allergome" id="2550">
    <property type="allergen name" value="Mus a 5"/>
</dbReference>
<dbReference type="Allergome" id="9859">
    <property type="allergen name" value="Mus a 5.0101"/>
</dbReference>
<dbReference type="Allergome" id="9860">
    <property type="allergen name" value="Mus a 5.0102"/>
</dbReference>
<dbReference type="CAZy" id="GH17">
    <property type="family name" value="Glycoside Hydrolase Family 17"/>
</dbReference>
<dbReference type="EvolutionaryTrace" id="O22317"/>
<dbReference type="GO" id="GO:0042973">
    <property type="term" value="F:glucan endo-1,3-beta-D-glucosidase activity"/>
    <property type="evidence" value="ECO:0000314"/>
    <property type="project" value="UniProtKB"/>
</dbReference>
<dbReference type="GO" id="GO:0005975">
    <property type="term" value="P:carbohydrate metabolic process"/>
    <property type="evidence" value="ECO:0007669"/>
    <property type="project" value="InterPro"/>
</dbReference>
<dbReference type="FunFam" id="3.20.20.80:FF:000010">
    <property type="entry name" value="glucan endo-1,3-beta-glucosidase, basic"/>
    <property type="match status" value="1"/>
</dbReference>
<dbReference type="Gene3D" id="3.20.20.80">
    <property type="entry name" value="Glycosidases"/>
    <property type="match status" value="1"/>
</dbReference>
<dbReference type="InterPro" id="IPR000490">
    <property type="entry name" value="Glyco_hydro_17"/>
</dbReference>
<dbReference type="InterPro" id="IPR044965">
    <property type="entry name" value="Glyco_hydro_17_plant"/>
</dbReference>
<dbReference type="InterPro" id="IPR017853">
    <property type="entry name" value="Glycoside_hydrolase_SF"/>
</dbReference>
<dbReference type="PANTHER" id="PTHR32227">
    <property type="entry name" value="GLUCAN ENDO-1,3-BETA-GLUCOSIDASE BG1-RELATED-RELATED"/>
    <property type="match status" value="1"/>
</dbReference>
<dbReference type="Pfam" id="PF00332">
    <property type="entry name" value="Glyco_hydro_17"/>
    <property type="match status" value="1"/>
</dbReference>
<dbReference type="SUPFAM" id="SSF51445">
    <property type="entry name" value="(Trans)glycosidases"/>
    <property type="match status" value="1"/>
</dbReference>
<dbReference type="PROSITE" id="PS00587">
    <property type="entry name" value="GLYCOSYL_HYDROL_F17"/>
    <property type="match status" value="1"/>
</dbReference>
<feature type="signal peptide" evidence="4">
    <location>
        <begin position="1"/>
        <end position="28"/>
    </location>
</feature>
<feature type="chain" id="PRO_5004157706" description="Glucan endo-1,3-beta-glucosidase">
    <location>
        <begin position="29"/>
        <end position="340"/>
    </location>
</feature>
<feature type="active site" description="Proton donor" evidence="10">
    <location>
        <position position="122"/>
    </location>
</feature>
<feature type="active site" description="Nucleophile" evidence="10">
    <location>
        <position position="264"/>
    </location>
</feature>
<feature type="sequence conflict" description="In Ref. 3; ADG36438." evidence="8" ref="3">
    <original>N</original>
    <variation>D</variation>
    <location>
        <position position="54"/>
    </location>
</feature>
<feature type="sequence conflict" description="In Ref. 2; ABU40624." evidence="8" ref="2">
    <original>LSSAGLQNQIK</original>
    <variation>FVLGWPAKTRFR</variation>
    <location>
        <begin position="144"/>
        <end position="154"/>
    </location>
</feature>
<feature type="sequence conflict" description="In Ref. 2; ABU40624." evidence="8" ref="2">
    <original>G</original>
    <variation>N</variation>
    <location>
        <position position="165"/>
    </location>
</feature>
<feature type="sequence conflict" description="In Ref. 2; ABU40624 and 3; ADG36438." evidence="8" ref="2 3">
    <original>R</original>
    <variation>Q</variation>
    <location>
        <position position="282"/>
    </location>
</feature>
<feature type="sequence conflict" description="In Ref. 3; ADG36438." evidence="8" ref="3">
    <original>I</original>
    <variation>M</variation>
    <location>
        <position position="338"/>
    </location>
</feature>
<feature type="strand" evidence="13">
    <location>
        <begin position="30"/>
        <end position="32"/>
    </location>
</feature>
<feature type="helix" evidence="13">
    <location>
        <begin position="43"/>
        <end position="52"/>
    </location>
</feature>
<feature type="strand" evidence="13">
    <location>
        <begin position="57"/>
        <end position="62"/>
    </location>
</feature>
<feature type="helix" evidence="13">
    <location>
        <begin position="65"/>
        <end position="71"/>
    </location>
</feature>
<feature type="strand" evidence="13">
    <location>
        <begin position="77"/>
        <end position="82"/>
    </location>
</feature>
<feature type="helix" evidence="13">
    <location>
        <begin position="84"/>
        <end position="86"/>
    </location>
</feature>
<feature type="helix" evidence="13">
    <location>
        <begin position="87"/>
        <end position="92"/>
    </location>
</feature>
<feature type="helix" evidence="13">
    <location>
        <begin position="96"/>
        <end position="104"/>
    </location>
</feature>
<feature type="helix" evidence="13">
    <location>
        <begin position="106"/>
        <end position="108"/>
    </location>
</feature>
<feature type="turn" evidence="13">
    <location>
        <begin position="109"/>
        <end position="111"/>
    </location>
</feature>
<feature type="strand" evidence="13">
    <location>
        <begin position="112"/>
        <end position="122"/>
    </location>
</feature>
<feature type="turn" evidence="13">
    <location>
        <begin position="124"/>
        <end position="126"/>
    </location>
</feature>
<feature type="helix" evidence="13">
    <location>
        <begin position="130"/>
        <end position="132"/>
    </location>
</feature>
<feature type="helix" evidence="13">
    <location>
        <begin position="133"/>
        <end position="146"/>
    </location>
</feature>
<feature type="turn" evidence="13">
    <location>
        <begin position="150"/>
        <end position="152"/>
    </location>
</feature>
<feature type="strand" evidence="13">
    <location>
        <begin position="153"/>
        <end position="160"/>
    </location>
</feature>
<feature type="helix" evidence="13">
    <location>
        <begin position="161"/>
        <end position="163"/>
    </location>
</feature>
<feature type="helix" evidence="13">
    <location>
        <begin position="170"/>
        <end position="172"/>
    </location>
</feature>
<feature type="helix" evidence="13">
    <location>
        <begin position="177"/>
        <end position="193"/>
    </location>
</feature>
<feature type="strand" evidence="13">
    <location>
        <begin position="197"/>
        <end position="200"/>
    </location>
</feature>
<feature type="helix" evidence="13">
    <location>
        <begin position="203"/>
        <end position="209"/>
    </location>
</feature>
<feature type="turn" evidence="13">
    <location>
        <begin position="211"/>
        <end position="213"/>
    </location>
</feature>
<feature type="helix" evidence="13">
    <location>
        <begin position="216"/>
        <end position="219"/>
    </location>
</feature>
<feature type="strand" evidence="13">
    <location>
        <begin position="227"/>
        <end position="230"/>
    </location>
</feature>
<feature type="strand" evidence="13">
    <location>
        <begin position="233"/>
        <end position="235"/>
    </location>
</feature>
<feature type="helix" evidence="13">
    <location>
        <begin position="238"/>
        <end position="251"/>
    </location>
</feature>
<feature type="turn" evidence="13">
    <location>
        <begin position="252"/>
        <end position="254"/>
    </location>
</feature>
<feature type="strand" evidence="13">
    <location>
        <begin position="260"/>
        <end position="265"/>
    </location>
</feature>
<feature type="strand" evidence="13">
    <location>
        <begin position="269"/>
        <end position="273"/>
    </location>
</feature>
<feature type="helix" evidence="13">
    <location>
        <begin position="278"/>
        <end position="291"/>
    </location>
</feature>
<feature type="helix" evidence="13">
    <location>
        <begin position="292"/>
        <end position="294"/>
    </location>
</feature>
<feature type="strand" evidence="13">
    <location>
        <begin position="297"/>
        <end position="299"/>
    </location>
</feature>
<feature type="strand" evidence="13">
    <location>
        <begin position="306"/>
        <end position="309"/>
    </location>
</feature>
<feature type="helix" evidence="13">
    <location>
        <begin position="321"/>
        <end position="323"/>
    </location>
</feature>
<feature type="strand" evidence="13">
    <location>
        <begin position="334"/>
        <end position="336"/>
    </location>
</feature>
<protein>
    <recommendedName>
        <fullName evidence="8">Glucan endo-1,3-beta-glucosidase</fullName>
        <ecNumber evidence="1">3.2.1.39</ecNumber>
    </recommendedName>
    <alternativeName>
        <fullName evidence="7">Beta-1,3-glucanase</fullName>
    </alternativeName>
    <allergenName evidence="8">Mus a 5</allergenName>
</protein>
<reference key="1">
    <citation type="journal article" date="1997" name="Plant Physiol.">
        <title>Differential gene expression in ripening banana fruit.</title>
        <authorList>
            <person name="Clendennen S.K."/>
            <person name="May G.D."/>
        </authorList>
    </citation>
    <scope>NUCLEOTIDE SEQUENCE [MRNA]</scope>
    <scope>TISSUE SPECIFICITY</scope>
    <scope>DEVELOPMENTAL STAGE</scope>
    <source>
        <strain>cv. Grand nain</strain>
        <tissue>Fruit flesh</tissue>
    </source>
</reference>
<reference key="2">
    <citation type="journal article" date="2010" name="Plant Cell Rep.">
        <title>Molecular characterization and differential expression of beta-1,3-glucanase during ripening in banana fruit in response to ethylene, auxin, ABA, wounding, cold and light-dark cycles.</title>
        <authorList>
            <person name="Roy Choudhury S."/>
            <person name="Roy S."/>
            <person name="Singh S.K."/>
            <person name="Sengupta D.N."/>
        </authorList>
    </citation>
    <scope>NUCLEOTIDE SEQUENCE [MRNA]</scope>
    <scope>FUNCTION</scope>
    <scope>DEVELOPMENTAL STAGE</scope>
    <scope>INDUCTION</scope>
    <source>
        <tissue>Fruit flesh</tissue>
    </source>
</reference>
<reference key="3">
    <citation type="journal article" date="2012" name="Mol. Nutr. Food Res.">
        <title>Molecular and immunological characterization of Mus a 5 allergen from banana fruit.</title>
        <authorList>
            <person name="Aleksic I."/>
            <person name="Popovic M."/>
            <person name="Dimitrijevic R."/>
            <person name="Andjelkovic U."/>
            <person name="Vassilopoulou E."/>
            <person name="Sinaniotis A."/>
            <person name="Atanaskovic-Markovic M."/>
            <person name="Lindner B."/>
            <person name="Petersen A."/>
            <person name="Papadopoulos N.G."/>
            <person name="Gavrovic-Jankulovic M."/>
        </authorList>
    </citation>
    <scope>NUCLEOTIDE SEQUENCE [MRNA] OF 29-340</scope>
    <scope>PROTEIN SEQUENCE OF 29-40</scope>
    <scope>IDENTIFICATION BY MASS SPECTROMETRY</scope>
    <scope>SUBUNIT</scope>
    <scope>ALLERGEN</scope>
</reference>
<reference key="4">
    <citation type="journal article" date="2000" name="Eur. J. Biochem.">
        <title>Purification, characterization and structural analysis of an abundant beta-1,3-glucanase from banana fruit.</title>
        <authorList>
            <person name="Peumans W.J."/>
            <person name="Barre A."/>
            <person name="Derycke V."/>
            <person name="Rouge P."/>
            <person name="Zhang W."/>
            <person name="May G.D."/>
            <person name="Delcour J.A."/>
            <person name="Van Leuven F."/>
            <person name="Van Damme E.J."/>
        </authorList>
    </citation>
    <scope>FUNCTION</scope>
    <scope>CATALYTIC ACTIVITY</scope>
    <scope>BIOPHYSICOCHEMICAL PROPERTIES</scope>
</reference>
<reference key="5">
    <citation type="journal article" date="2014" name="Mol. Biotechnol.">
        <title>Molecular characterization of recombinant mus a 5 allergen from banana fruit.</title>
        <authorList>
            <person name="Mrkic I."/>
            <person name="Abughren M."/>
            <person name="Nikolic J."/>
            <person name="Andjelkovic U."/>
            <person name="Vassilopoulou E."/>
            <person name="Sinaniotis A."/>
            <person name="Petersen A."/>
            <person name="Papadopoulos N.G."/>
            <person name="Gavrovic-Jankulovic M."/>
        </authorList>
    </citation>
    <scope>FUNCTION</scope>
    <scope>IDENTIFICATION BY MASS SPECTROMETRY</scope>
</reference>
<reference key="6">
    <citation type="journal article" date="2006" name="Proteins">
        <title>Crystal structure at 1.45-A resolution of the major allergen endo-beta-1,3-glucanase of banana as a molecular basis for the latex-fruit syndrome.</title>
        <authorList>
            <person name="Receveur-Brechot V."/>
            <person name="Czjzek M."/>
            <person name="Barre A."/>
            <person name="Roussel A."/>
            <person name="Peumans W.J."/>
            <person name="Van Damme E.J."/>
            <person name="Rouge P."/>
        </authorList>
    </citation>
    <scope>X-RAY CRYSTALLOGRAPHY (1.45 ANGSTROMS) OF 29-340</scope>
    <scope>FUNCTION</scope>
    <scope>ACTIVE SITE</scope>
</reference>
<proteinExistence type="evidence at protein level"/>
<name>E13C_MUSAC</name>
<sequence length="340" mass="36321">MATKASLSIKGFALLVSVLVAVPTRVQSIGVCYGMLGNNLPPPSEVVSLYKSNNIARMRLYDPNQAALQALRNSNIQVLLDVPRSDVQSLASNPSAAGDWIRRNVVAYWPSVSFRYIAVGNELIPGSDLAQYILPAMRNIYNALSSAGLQNQIKVSTAVDTGVLGTSYPPSAGAFSSAAQAYLSPIVQFLASNGAPLLVNVYPYFSYTGNPGQISLPYALFTASGVVVQDGRFSYQNLFDAIVDAVFAALERVGGANVAVVVSESGWPSAGGGAEASTSNARTYNQNLIRHVGGGTPRRPGKEIEAYIFEMFNENQKAGGIEQNFGLFYPNKQPVYQISF</sequence>
<evidence type="ECO:0000269" key="1">
    <source>
    </source>
</evidence>
<evidence type="ECO:0000269" key="2">
    <source>
    </source>
</evidence>
<evidence type="ECO:0000269" key="3">
    <source>
    </source>
</evidence>
<evidence type="ECO:0000269" key="4">
    <source>
    </source>
</evidence>
<evidence type="ECO:0000269" key="5">
    <source>
    </source>
</evidence>
<evidence type="ECO:0000269" key="6">
    <source>
    </source>
</evidence>
<evidence type="ECO:0000303" key="7">
    <source>
    </source>
</evidence>
<evidence type="ECO:0000305" key="8"/>
<evidence type="ECO:0000305" key="9">
    <source>
    </source>
</evidence>
<evidence type="ECO:0000305" key="10">
    <source>
    </source>
</evidence>
<evidence type="ECO:0000305" key="11">
    <source>
    </source>
</evidence>
<evidence type="ECO:0000305" key="12">
    <source>
    </source>
</evidence>
<evidence type="ECO:0007829" key="13">
    <source>
        <dbReference type="PDB" id="2CYG"/>
    </source>
</evidence>
<gene>
    <name evidence="8" type="primary">BANGLUC</name>
</gene>